<feature type="chain" id="PRO_0000349223" description="Endonuclease V">
    <location>
        <begin position="1"/>
        <end position="282"/>
    </location>
</feature>
<feature type="region of interest" description="Disordered" evidence="2">
    <location>
        <begin position="250"/>
        <end position="282"/>
    </location>
</feature>
<feature type="binding site" evidence="13">
    <location>
        <position position="52"/>
    </location>
    <ligand>
        <name>Mg(2+)</name>
        <dbReference type="ChEBI" id="CHEBI:18420"/>
    </ligand>
</feature>
<feature type="binding site" evidence="1">
    <location>
        <position position="126"/>
    </location>
    <ligand>
        <name>Mg(2+)</name>
        <dbReference type="ChEBI" id="CHEBI:18420"/>
    </ligand>
</feature>
<feature type="site" description="Interaction with target RNA" evidence="13">
    <location>
        <position position="91"/>
    </location>
</feature>
<feature type="splice variant" id="VSP_035228" description="In isoform 4 and isoform 5." evidence="10 11">
    <location>
        <begin position="1"/>
        <end position="194"/>
    </location>
</feature>
<feature type="splice variant" id="VSP_035229" description="In isoform 2 and isoform 3." evidence="10 11">
    <location>
        <begin position="77"/>
        <end position="121"/>
    </location>
</feature>
<feature type="splice variant" id="VSP_035230" description="In isoform 4." evidence="11">
    <original>ADICSREHIRKSLGLPGPPTPRSPKAQRPVACPKGDSGESSALC</original>
    <variation>HFVERGGESTRPRLIPDRTRW</variation>
    <location>
        <begin position="239"/>
        <end position="282"/>
    </location>
</feature>
<feature type="splice variant" id="VSP_035231" description="In isoform 3 and isoform 7." evidence="11">
    <original>ALC</original>
    <variation>GEGQPPQDHSPGPRTAPRPGSQEQAGKDWQ</variation>
    <location>
        <begin position="280"/>
        <end position="282"/>
    </location>
</feature>
<feature type="splice variant" id="VSP_060583" description="In isoform 6.">
    <original>ALC</original>
    <variation>GGAPSPQRQADRTTPGGRRSTAQHQVGQR</variation>
    <location>
        <begin position="280"/>
        <end position="282"/>
    </location>
</feature>
<feature type="sequence variant" id="VAR_046285" description="In dbSNP:rs35549084." evidence="9">
    <original>V</original>
    <variation>I</variation>
    <location>
        <position position="29"/>
    </location>
</feature>
<feature type="sequence variant" id="VAR_046286" description="In dbSNP:rs34933300." evidence="9">
    <original>R</original>
    <variation>Q</variation>
    <location>
        <position position="112"/>
    </location>
</feature>
<feature type="sequence variant" id="VAR_046287" description="In dbSNP:rs41298706." evidence="9">
    <original>K</original>
    <variation>R</variation>
    <location>
        <position position="114"/>
    </location>
</feature>
<feature type="sequence variant" id="VAR_046288" description="In dbSNP:rs41299812." evidence="9">
    <original>H</original>
    <variation>Y</variation>
    <location>
        <position position="141"/>
    </location>
</feature>
<feature type="sequence variant" id="VAR_046289" description="In dbSNP:rs35929621." evidence="9">
    <original>D</original>
    <variation>N</variation>
    <location>
        <position position="201"/>
    </location>
</feature>
<feature type="mutagenesis site" description="Does not gain activity against single- or double-stranded DNA." evidence="6">
    <location>
        <begin position="35"/>
        <end position="40"/>
    </location>
</feature>
<feature type="mutagenesis site" description="Abolishes ribonuclease activity." evidence="4 5 7">
    <original>D</original>
    <variation>A</variation>
    <location>
        <position position="52"/>
    </location>
</feature>
<feature type="mutagenesis site" description="Does not gain activity against single- or double-stranded DNA." evidence="6">
    <original>KGDS</original>
    <variation>QGGE</variation>
    <location>
        <begin position="57"/>
        <end position="60"/>
    </location>
</feature>
<feature type="mutagenesis site" description="Abolishes ability to bind branched DNA and RNA." evidence="4">
    <original>PYVS</original>
    <variation>GGGG</variation>
    <location>
        <begin position="90"/>
        <end position="93"/>
    </location>
</feature>
<feature type="mutagenesis site" description="Abolishes ribonuclease activity without affecting ability to bind branched DNA." evidence="4 5">
    <original>Y</original>
    <variation>A</variation>
    <location>
        <position position="91"/>
    </location>
</feature>
<feature type="mutagenesis site" description="Abolishes ribonuclease activity." evidence="5">
    <original>E</original>
    <variation>A</variation>
    <location>
        <position position="100"/>
    </location>
</feature>
<feature type="mutagenesis site" description="Does not gain activity against single- or double-stranded DNA." evidence="6">
    <location>
        <begin position="115"/>
        <end position="119"/>
    </location>
</feature>
<feature type="mutagenesis site" description="Does not gain activity against single- or double-stranded DNA." evidence="6">
    <location>
        <begin position="161"/>
        <end position="166"/>
    </location>
</feature>
<feature type="mutagenesis site" description="No effect on subcellular location or activity; when associated with A-174." evidence="8">
    <original>E</original>
    <variation>A</variation>
    <location>
        <position position="171"/>
    </location>
</feature>
<feature type="mutagenesis site" description="No effect on subcellular location or activity; when associated with A-171." evidence="8">
    <original>R</original>
    <variation>A</variation>
    <location>
        <position position="174"/>
    </location>
</feature>
<feature type="mutagenesis site" description="No significant effect on activity." evidence="6">
    <original>C</original>
    <variation>S</variation>
    <location>
        <position position="225"/>
    </location>
</feature>
<feature type="mutagenesis site" description="No significant effect on activity." evidence="6">
    <original>C</original>
    <variation>S</variation>
    <location>
        <position position="226"/>
    </location>
</feature>
<feature type="mutagenesis site" description="68% decrease in activity." evidence="6">
    <original>C</original>
    <variation>S</variation>
    <location>
        <position position="227"/>
    </location>
</feature>
<feature type="mutagenesis site" description="46% decrease in activity." evidence="6">
    <original>C</original>
    <variation>S</variation>
    <location>
        <position position="228"/>
    </location>
</feature>
<feature type="mutagenesis site" description="Abolishes ability to bind branched DNA and RNA." evidence="4">
    <original>RK</original>
    <variation>AA</variation>
    <location>
        <begin position="248"/>
        <end position="249"/>
    </location>
</feature>
<feature type="sequence conflict" description="In Ref. 1; BAC03912." evidence="13" ref="1">
    <original>R</original>
    <variation>W</variation>
    <location>
        <position position="19"/>
    </location>
</feature>
<feature type="helix" evidence="17">
    <location>
        <begin position="11"/>
        <end position="25"/>
    </location>
</feature>
<feature type="helix" evidence="17">
    <location>
        <begin position="35"/>
        <end position="38"/>
    </location>
</feature>
<feature type="strand" evidence="17">
    <location>
        <begin position="47"/>
        <end position="55"/>
    </location>
</feature>
<feature type="strand" evidence="17">
    <location>
        <begin position="60"/>
        <end position="71"/>
    </location>
</feature>
<feature type="turn" evidence="17">
    <location>
        <begin position="72"/>
        <end position="74"/>
    </location>
</feature>
<feature type="strand" evidence="17">
    <location>
        <begin position="77"/>
        <end position="86"/>
    </location>
</feature>
<feature type="helix" evidence="17">
    <location>
        <begin position="97"/>
        <end position="114"/>
    </location>
</feature>
<feature type="helix" evidence="17">
    <location>
        <begin position="116"/>
        <end position="118"/>
    </location>
</feature>
<feature type="strand" evidence="17">
    <location>
        <begin position="121"/>
        <end position="127"/>
    </location>
</feature>
<feature type="strand" evidence="17">
    <location>
        <begin position="129"/>
        <end position="132"/>
    </location>
</feature>
<feature type="helix" evidence="17">
    <location>
        <begin position="138"/>
        <end position="146"/>
    </location>
</feature>
<feature type="strand" evidence="17">
    <location>
        <begin position="150"/>
        <end position="156"/>
    </location>
</feature>
<feature type="helix" evidence="17">
    <location>
        <begin position="167"/>
        <end position="175"/>
    </location>
</feature>
<feature type="strand" evidence="17">
    <location>
        <begin position="182"/>
        <end position="186"/>
    </location>
</feature>
<feature type="strand" evidence="17">
    <location>
        <begin position="192"/>
        <end position="197"/>
    </location>
</feature>
<feature type="strand" evidence="17">
    <location>
        <begin position="207"/>
        <end position="215"/>
    </location>
</feature>
<feature type="helix" evidence="17">
    <location>
        <begin position="217"/>
        <end position="226"/>
    </location>
</feature>
<feature type="strand" evidence="17">
    <location>
        <begin position="229"/>
        <end position="232"/>
    </location>
</feature>
<feature type="helix" evidence="17">
    <location>
        <begin position="234"/>
        <end position="250"/>
    </location>
</feature>
<accession>Q8N8Q3</accession>
<accession>I3L3S4</accession>
<accession>Q6P2G2</accession>
<accession>Q86X99</accession>
<accession>Q8NAK0</accession>
<dbReference type="EC" id="3.1.26.-" evidence="4 5 6 7 8"/>
<dbReference type="EMBL" id="AK092539">
    <property type="protein sequence ID" value="BAC03912.1"/>
    <property type="molecule type" value="mRNA"/>
</dbReference>
<dbReference type="EMBL" id="AK096344">
    <property type="protein sequence ID" value="BAC04765.1"/>
    <property type="molecule type" value="mRNA"/>
</dbReference>
<dbReference type="EMBL" id="AK096802">
    <property type="status" value="NOT_ANNOTATED_CDS"/>
    <property type="molecule type" value="mRNA"/>
</dbReference>
<dbReference type="EMBL" id="DQ500957">
    <property type="protein sequence ID" value="ABF47100.1"/>
    <property type="molecule type" value="Genomic_DNA"/>
</dbReference>
<dbReference type="EMBL" id="AC120024">
    <property type="status" value="NOT_ANNOTATED_CDS"/>
    <property type="molecule type" value="Genomic_DNA"/>
</dbReference>
<dbReference type="EMBL" id="CH471099">
    <property type="protein sequence ID" value="EAW89607.1"/>
    <property type="molecule type" value="Genomic_DNA"/>
</dbReference>
<dbReference type="EMBL" id="CH471099">
    <property type="protein sequence ID" value="EAW89605.1"/>
    <property type="molecule type" value="Genomic_DNA"/>
</dbReference>
<dbReference type="EMBL" id="CH471099">
    <property type="protein sequence ID" value="EAW89615.1"/>
    <property type="molecule type" value="Genomic_DNA"/>
</dbReference>
<dbReference type="EMBL" id="BC037889">
    <property type="protein sequence ID" value="AAH37889.1"/>
    <property type="molecule type" value="mRNA"/>
</dbReference>
<dbReference type="EMBL" id="BC045824">
    <property type="protein sequence ID" value="AAH45824.1"/>
    <property type="molecule type" value="mRNA"/>
</dbReference>
<dbReference type="EMBL" id="BC064545">
    <property type="protein sequence ID" value="AAH64545.1"/>
    <property type="molecule type" value="mRNA"/>
</dbReference>
<dbReference type="CCDS" id="CCDS54172.1">
    <molecule id="Q8N8Q3-1"/>
</dbReference>
<dbReference type="CCDS" id="CCDS54173.1">
    <molecule id="Q8N8Q3-2"/>
</dbReference>
<dbReference type="CCDS" id="CCDS54174.1">
    <molecule id="Q8N8Q3-3"/>
</dbReference>
<dbReference type="RefSeq" id="NP_001158109.1">
    <molecule id="Q8N8Q3-2"/>
    <property type="nucleotide sequence ID" value="NM_001164637.3"/>
</dbReference>
<dbReference type="RefSeq" id="NP_001158110.1">
    <molecule id="Q8N8Q3-3"/>
    <property type="nucleotide sequence ID" value="NM_001164638.3"/>
</dbReference>
<dbReference type="RefSeq" id="NP_001339689.1">
    <molecule id="Q8N8Q3-7"/>
    <property type="nucleotide sequence ID" value="NM_001352760.3"/>
</dbReference>
<dbReference type="RefSeq" id="NP_001339690.1">
    <molecule id="Q8N8Q3-6"/>
    <property type="nucleotide sequence ID" value="NM_001352761.3"/>
</dbReference>
<dbReference type="RefSeq" id="NP_775898.2">
    <molecule id="Q8N8Q3-1"/>
    <property type="nucleotide sequence ID" value="NM_173627.4"/>
</dbReference>
<dbReference type="RefSeq" id="XP_005257301.1">
    <property type="nucleotide sequence ID" value="XM_005257244.3"/>
</dbReference>
<dbReference type="PDB" id="4NSP">
    <property type="method" value="X-ray"/>
    <property type="resolution" value="2.30 A"/>
    <property type="chains" value="A=13-250"/>
</dbReference>
<dbReference type="PDB" id="6OZE">
    <property type="method" value="X-ray"/>
    <property type="resolution" value="1.50 A"/>
    <property type="chains" value="A=9-254"/>
</dbReference>
<dbReference type="PDBsum" id="4NSP"/>
<dbReference type="PDBsum" id="6OZE"/>
<dbReference type="SMR" id="Q8N8Q3"/>
<dbReference type="BioGRID" id="129772">
    <property type="interactions" value="16"/>
</dbReference>
<dbReference type="FunCoup" id="Q8N8Q3">
    <property type="interactions" value="1568"/>
</dbReference>
<dbReference type="IntAct" id="Q8N8Q3">
    <property type="interactions" value="14"/>
</dbReference>
<dbReference type="STRING" id="9606.ENSP00000429190"/>
<dbReference type="GlyGen" id="Q8N8Q3">
    <property type="glycosylation" value="1 site"/>
</dbReference>
<dbReference type="iPTMnet" id="Q8N8Q3"/>
<dbReference type="PhosphoSitePlus" id="Q8N8Q3"/>
<dbReference type="BioMuta" id="ENDOV"/>
<dbReference type="DMDM" id="74729504"/>
<dbReference type="jPOST" id="Q8N8Q3"/>
<dbReference type="MassIVE" id="Q8N8Q3"/>
<dbReference type="PaxDb" id="9606-ENSP00000429190"/>
<dbReference type="PeptideAtlas" id="Q8N8Q3"/>
<dbReference type="ProteomicsDB" id="47312"/>
<dbReference type="ProteomicsDB" id="72445">
    <molecule id="Q8N8Q3-1"/>
</dbReference>
<dbReference type="ProteomicsDB" id="72446">
    <molecule id="Q8N8Q3-2"/>
</dbReference>
<dbReference type="ProteomicsDB" id="72447">
    <molecule id="Q8N8Q3-3"/>
</dbReference>
<dbReference type="Antibodypedia" id="32763">
    <property type="antibodies" value="22 antibodies from 10 providers"/>
</dbReference>
<dbReference type="DNASU" id="284131"/>
<dbReference type="Ensembl" id="ENST00000323854.9">
    <molecule id="Q8N8Q3-3"/>
    <property type="protein sequence ID" value="ENSP00000317810.5"/>
    <property type="gene ID" value="ENSG00000173818.17"/>
</dbReference>
<dbReference type="Ensembl" id="ENST00000517795.5">
    <molecule id="Q8N8Q3-5"/>
    <property type="protein sequence ID" value="ENSP00000461577.1"/>
    <property type="gene ID" value="ENSG00000173818.17"/>
</dbReference>
<dbReference type="Ensembl" id="ENST00000518137.6">
    <molecule id="Q8N8Q3-1"/>
    <property type="protein sequence ID" value="ENSP00000429190.1"/>
    <property type="gene ID" value="ENSG00000173818.17"/>
</dbReference>
<dbReference type="Ensembl" id="ENST00000518901.5">
    <molecule id="Q8N8Q3-5"/>
    <property type="protein sequence ID" value="ENSP00000460685.1"/>
    <property type="gene ID" value="ENSG00000173818.17"/>
</dbReference>
<dbReference type="Ensembl" id="ENST00000518907.5">
    <molecule id="Q8N8Q3-4"/>
    <property type="protein sequence ID" value="ENSP00000458361.1"/>
    <property type="gene ID" value="ENSG00000173818.17"/>
</dbReference>
<dbReference type="Ensembl" id="ENST00000520284.5">
    <molecule id="Q8N8Q3-4"/>
    <property type="protein sequence ID" value="ENSP00000458391.1"/>
    <property type="gene ID" value="ENSG00000173818.17"/>
</dbReference>
<dbReference type="Ensembl" id="ENST00000520367.5">
    <molecule id="Q8N8Q3-2"/>
    <property type="protein sequence ID" value="ENSP00000431036.1"/>
    <property type="gene ID" value="ENSG00000173818.17"/>
</dbReference>
<dbReference type="GeneID" id="284131"/>
<dbReference type="KEGG" id="hsa:284131"/>
<dbReference type="MANE-Select" id="ENST00000518137.6">
    <property type="protein sequence ID" value="ENSP00000429190.1"/>
    <property type="RefSeq nucleotide sequence ID" value="NM_173627.5"/>
    <property type="RefSeq protein sequence ID" value="NP_775898.2"/>
</dbReference>
<dbReference type="UCSC" id="uc002jyk.4">
    <molecule id="Q8N8Q3-1"/>
    <property type="organism name" value="human"/>
</dbReference>
<dbReference type="AGR" id="HGNC:26640"/>
<dbReference type="CTD" id="284131"/>
<dbReference type="DisGeNET" id="284131"/>
<dbReference type="GeneCards" id="ENDOV"/>
<dbReference type="HGNC" id="HGNC:26640">
    <property type="gene designation" value="ENDOV"/>
</dbReference>
<dbReference type="HPA" id="ENSG00000173818">
    <property type="expression patterns" value="Low tissue specificity"/>
</dbReference>
<dbReference type="MIM" id="619821">
    <property type="type" value="gene"/>
</dbReference>
<dbReference type="neXtProt" id="NX_Q8N8Q3"/>
<dbReference type="OpenTargets" id="ENSG00000173818"/>
<dbReference type="VEuPathDB" id="HostDB:ENSG00000173818"/>
<dbReference type="eggNOG" id="KOG4417">
    <property type="taxonomic scope" value="Eukaryota"/>
</dbReference>
<dbReference type="GeneTree" id="ENSGT00390000011880"/>
<dbReference type="HOGENOM" id="CLU_047631_0_1_1"/>
<dbReference type="InParanoid" id="Q8N8Q3"/>
<dbReference type="OMA" id="NACAHTL"/>
<dbReference type="OrthoDB" id="20018at2759"/>
<dbReference type="PAN-GO" id="Q8N8Q3">
    <property type="GO annotations" value="4 GO annotations based on evolutionary models"/>
</dbReference>
<dbReference type="PhylomeDB" id="Q8N8Q3"/>
<dbReference type="TreeFam" id="TF300065"/>
<dbReference type="BRENDA" id="3.1.21.7">
    <property type="organism ID" value="2681"/>
</dbReference>
<dbReference type="BRENDA" id="3.1.27.8">
    <property type="organism ID" value="2681"/>
</dbReference>
<dbReference type="PathwayCommons" id="Q8N8Q3"/>
<dbReference type="SignaLink" id="Q8N8Q3"/>
<dbReference type="BioGRID-ORCS" id="284131">
    <property type="hits" value="16 hits in 1151 CRISPR screens"/>
</dbReference>
<dbReference type="EvolutionaryTrace" id="Q8N8Q3"/>
<dbReference type="GenomeRNAi" id="284131"/>
<dbReference type="Pharos" id="Q8N8Q3">
    <property type="development level" value="Tbio"/>
</dbReference>
<dbReference type="PRO" id="PR:Q8N8Q3"/>
<dbReference type="Proteomes" id="UP000005640">
    <property type="component" value="Chromosome 17"/>
</dbReference>
<dbReference type="RNAct" id="Q8N8Q3">
    <property type="molecule type" value="protein"/>
</dbReference>
<dbReference type="Bgee" id="ENSG00000173818">
    <property type="expression patterns" value="Expressed in parotid gland and 163 other cell types or tissues"/>
</dbReference>
<dbReference type="ExpressionAtlas" id="Q8N8Q3">
    <property type="expression patterns" value="baseline and differential"/>
</dbReference>
<dbReference type="GO" id="GO:0005737">
    <property type="term" value="C:cytoplasm"/>
    <property type="evidence" value="ECO:0000314"/>
    <property type="project" value="UniProtKB"/>
</dbReference>
<dbReference type="GO" id="GO:0010494">
    <property type="term" value="C:cytoplasmic stress granule"/>
    <property type="evidence" value="ECO:0000314"/>
    <property type="project" value="UniProtKB"/>
</dbReference>
<dbReference type="GO" id="GO:0005730">
    <property type="term" value="C:nucleolus"/>
    <property type="evidence" value="ECO:0000314"/>
    <property type="project" value="UniProtKB"/>
</dbReference>
<dbReference type="GO" id="GO:0003677">
    <property type="term" value="F:DNA binding"/>
    <property type="evidence" value="ECO:0000314"/>
    <property type="project" value="UniProtKB"/>
</dbReference>
<dbReference type="GO" id="GO:0016888">
    <property type="term" value="F:endodeoxyribonuclease activity, producing 5'-phosphomonoesters"/>
    <property type="evidence" value="ECO:0000250"/>
    <property type="project" value="UniProtKB"/>
</dbReference>
<dbReference type="GO" id="GO:0000287">
    <property type="term" value="F:magnesium ion binding"/>
    <property type="evidence" value="ECO:0000250"/>
    <property type="project" value="UniProtKB"/>
</dbReference>
<dbReference type="GO" id="GO:0016891">
    <property type="term" value="F:RNA endonuclease activity, producing 5'-phosphomonoesters"/>
    <property type="evidence" value="ECO:0000314"/>
    <property type="project" value="UniProtKB"/>
</dbReference>
<dbReference type="GO" id="GO:0003727">
    <property type="term" value="F:single-stranded RNA binding"/>
    <property type="evidence" value="ECO:0000314"/>
    <property type="project" value="UniProtKB"/>
</dbReference>
<dbReference type="GO" id="GO:0006281">
    <property type="term" value="P:DNA repair"/>
    <property type="evidence" value="ECO:0007669"/>
    <property type="project" value="InterPro"/>
</dbReference>
<dbReference type="CDD" id="cd06559">
    <property type="entry name" value="Endonuclease_V"/>
    <property type="match status" value="1"/>
</dbReference>
<dbReference type="FunFam" id="3.30.2170.10:FF:000002">
    <property type="entry name" value="Endonuclease V"/>
    <property type="match status" value="1"/>
</dbReference>
<dbReference type="Gene3D" id="3.30.2170.10">
    <property type="entry name" value="archaeoglobus fulgidus dsm 4304 superfamily"/>
    <property type="match status" value="1"/>
</dbReference>
<dbReference type="HAMAP" id="MF_00801">
    <property type="entry name" value="Endonuclease_5"/>
    <property type="match status" value="1"/>
</dbReference>
<dbReference type="InterPro" id="IPR007581">
    <property type="entry name" value="Endonuclease-V"/>
</dbReference>
<dbReference type="PANTHER" id="PTHR28511">
    <property type="entry name" value="ENDONUCLEASE V"/>
    <property type="match status" value="1"/>
</dbReference>
<dbReference type="PANTHER" id="PTHR28511:SF1">
    <property type="entry name" value="ENDONUCLEASE V"/>
    <property type="match status" value="1"/>
</dbReference>
<dbReference type="Pfam" id="PF04493">
    <property type="entry name" value="Endonuclease_5"/>
    <property type="match status" value="1"/>
</dbReference>
<gene>
    <name type="primary">ENDOV</name>
</gene>
<sequence>MALEAAGGPPEETLSLWKREQARLKAHVVDRDTEAWQRDPAFSGLQRVGGVDVSFVKGDSVRACASLVVLSFPELEVVYEESRMVSLTAPYVSGFLAFREVPFLLELVQQLREKEPGLMPQVLLVDGNGVLHHRGFGVACHLGVLTDLPCVGVAKKLLQVDGLENNALHKEKIRLLQTRGDSFPLLGDSGTVLGMALRSHDRSTRPLYISVGHRMSLEAAVRLTCCCCRFRIPEPVRQADICSREHIRKSLGLPGPPTPRSPKAQRPVACPKGDSGESSALC</sequence>
<evidence type="ECO:0000250" key="1"/>
<evidence type="ECO:0000256" key="2">
    <source>
        <dbReference type="SAM" id="MobiDB-lite"/>
    </source>
</evidence>
<evidence type="ECO:0000269" key="3">
    <source>
    </source>
</evidence>
<evidence type="ECO:0000269" key="4">
    <source>
    </source>
</evidence>
<evidence type="ECO:0000269" key="5">
    <source>
    </source>
</evidence>
<evidence type="ECO:0000269" key="6">
    <source>
    </source>
</evidence>
<evidence type="ECO:0000269" key="7">
    <source>
    </source>
</evidence>
<evidence type="ECO:0000269" key="8">
    <source>
    </source>
</evidence>
<evidence type="ECO:0000269" key="9">
    <source ref="2"/>
</evidence>
<evidence type="ECO:0000303" key="10">
    <source>
    </source>
</evidence>
<evidence type="ECO:0000303" key="11">
    <source>
    </source>
</evidence>
<evidence type="ECO:0000303" key="12">
    <source>
    </source>
</evidence>
<evidence type="ECO:0000305" key="13"/>
<evidence type="ECO:0000305" key="14">
    <source>
    </source>
</evidence>
<evidence type="ECO:0000305" key="15">
    <source>
    </source>
</evidence>
<evidence type="ECO:0007744" key="16">
    <source>
        <dbReference type="PDB" id="4NSP"/>
    </source>
</evidence>
<evidence type="ECO:0007829" key="17">
    <source>
        <dbReference type="PDB" id="6OZE"/>
    </source>
</evidence>
<proteinExistence type="evidence at protein level"/>
<keyword id="KW-0002">3D-structure</keyword>
<keyword id="KW-0025">Alternative splicing</keyword>
<keyword id="KW-0963">Cytoplasm</keyword>
<keyword id="KW-0238">DNA-binding</keyword>
<keyword id="KW-0255">Endonuclease</keyword>
<keyword id="KW-0378">Hydrolase</keyword>
<keyword id="KW-0460">Magnesium</keyword>
<keyword id="KW-0479">Metal-binding</keyword>
<keyword id="KW-0540">Nuclease</keyword>
<keyword id="KW-0539">Nucleus</keyword>
<keyword id="KW-1267">Proteomics identification</keyword>
<keyword id="KW-1185">Reference proteome</keyword>
<keyword id="KW-0694">RNA-binding</keyword>
<name>ENDOV_HUMAN</name>
<comment type="function">
    <molecule>Isoform 1</molecule>
    <text evidence="3 4 5 6 7 8 13">Endoribonuclease that specifically cleaves inosine-containing RNAs: cleaves RNA at the second phosphodiester bond 3' to inosine (PubMed:23912683, PubMed:23912718, PubMed:25195743, PubMed:27573237, PubMed:31703097). Active against both single-stranded and double-stranded RNAs (PubMed:25195743, PubMed:31703097). Has strong preference for single-stranded RNAs (ssRNAs) toward double-stranded RNAs (dsRNAs) (PubMed:23912718). Cleaves mRNAs and tRNAs containing inosine (PubMed:23912683, PubMed:31703097). Also able to cleave structure-specific dsRNA substrates containing the specific sites 5'-IIUI-3' and 5'-UIUU-3' (PubMed:23912718, PubMed:27573237). Inosine is present in a number of RNAs following editing; the function of inosine-specific endoribonuclease is still unclear: it could either play a regulatory role in edited RNAs, or be involved in antiviral response by removing the hyperedited long viral dsRNA genome that has undergone A-to-I editing (Probable). Binds branched DNA structures (PubMed:23139746).</text>
</comment>
<comment type="function">
    <molecule>Isoform 6</molecule>
    <text evidence="8">Endoribonuclease that specifically cleaves inosine-containing RNAs: cleaves RNA at the second phosphodiester bond 3' to inosine (PubMed:31703097). Active against both single-stranded and double-stranded RNAs (PubMed:31703097). Cleaves tRNAs containing inosine (PubMed:31703097).</text>
</comment>
<comment type="function">
    <molecule>Isoform 7</molecule>
    <text evidence="8">Endoribonuclease that specifically cleaves inosine-containing RNAs: cleaves RNA at the second phosphodiester bond 3' to inosine (PubMed:31703097). Active against both single-stranded and double-stranded RNAs (PubMed:31703097). Cleaves tRNAs containing inosine (PubMed:31703097).</text>
</comment>
<comment type="cofactor">
    <cofactor evidence="15">
        <name>Mg(2+)</name>
        <dbReference type="ChEBI" id="CHEBI:18420"/>
    </cofactor>
</comment>
<comment type="activity regulation">
    <molecule>Isoform 1</molecule>
    <text evidence="7">Inhibited by normal intracellular concentrations of ATP.</text>
</comment>
<comment type="subunit">
    <text evidence="6 7">Monomer (PubMed:25195743). Interacts with PABPC1; the interaction is RNA-dependent and stimulates ENDOV activity (PubMed:27573237).</text>
</comment>
<comment type="subcellular location">
    <molecule>Isoform 1</molecule>
    <subcellularLocation>
        <location evidence="5 8">Cytoplasm</location>
    </subcellularLocation>
    <subcellularLocation>
        <location evidence="3 8">Nucleus</location>
        <location evidence="3 8">Nucleolus</location>
    </subcellularLocation>
    <subcellularLocation>
        <location evidence="7">Cytoplasm</location>
        <location evidence="7">Stress granule</location>
    </subcellularLocation>
    <text evidence="7">Relocalizes to cytoplasmic stress granules upon cellular stress where it colocalizes with PABPC1.</text>
</comment>
<comment type="subcellular location">
    <molecule>Isoform 6</molecule>
    <subcellularLocation>
        <location evidence="8">Cytoplasm</location>
    </subcellularLocation>
    <subcellularLocation>
        <location evidence="8">Nucleus</location>
        <location evidence="8">Nucleolus</location>
    </subcellularLocation>
    <subcellularLocation>
        <location evidence="8">Cytoplasm</location>
        <location evidence="8">Stress granule</location>
    </subcellularLocation>
    <text evidence="8">Relocalizes to cytoplasmic stress granules upon cellular stress.</text>
</comment>
<comment type="subcellular location">
    <molecule>Isoform 7</molecule>
    <subcellularLocation>
        <location evidence="8">Cytoplasm</location>
    </subcellularLocation>
    <subcellularLocation>
        <location evidence="8">Nucleus</location>
        <location evidence="8">Nucleolus</location>
    </subcellularLocation>
    <subcellularLocation>
        <location evidence="8">Cytoplasm</location>
        <location evidence="8">Stress granule</location>
    </subcellularLocation>
    <text evidence="8">Relocalizes to cytoplasmic stress granules upon cellular stress.</text>
</comment>
<comment type="alternative products">
    <event type="alternative splicing"/>
    <isoform>
        <id>Q8N8Q3-1</id>
        <name>1</name>
        <name evidence="12">hENDOV 282</name>
        <sequence type="displayed"/>
    </isoform>
    <isoform>
        <id>Q8N8Q3-2</id>
        <name>2</name>
        <sequence type="described" ref="VSP_035229"/>
    </isoform>
    <isoform>
        <id>Q8N8Q3-3</id>
        <name>3</name>
        <sequence type="described" ref="VSP_035229 VSP_035231"/>
    </isoform>
    <isoform>
        <id>Q8N8Q3-4</id>
        <name>4</name>
        <sequence type="described" ref="VSP_035228 VSP_035230"/>
    </isoform>
    <isoform>
        <id>Q8N8Q3-5</id>
        <name>5</name>
        <sequence type="described" ref="VSP_035228"/>
    </isoform>
    <isoform>
        <id>Q8N8Q3-6</id>
        <name>6</name>
        <name evidence="12">hENDOV 308</name>
        <sequence type="described" ref="VSP_060583"/>
    </isoform>
    <isoform>
        <id>Q8N8Q3-7</id>
        <name>7</name>
        <name evidence="12">hENDOV 309</name>
        <sequence type="described" ref="VSP_035231"/>
    </isoform>
</comment>
<comment type="similarity">
    <text evidence="13">Belongs to the endonuclease V family.</text>
</comment>
<comment type="caution">
    <text evidence="14">Was initially characterized as an endodeoxyribonuclease involved in DNA repair (PubMed:22664237). While it shows some weak endodeoxyribonuclease activity in vitro, such activity probably does not exist in vivo.</text>
</comment>
<protein>
    <recommendedName>
        <fullName>Endonuclease V</fullName>
        <shortName>hEndoV</shortName>
        <ecNumber evidence="4 5 6 7 8">3.1.26.-</ecNumber>
    </recommendedName>
    <alternativeName>
        <fullName>Inosine-specific endoribonuclease</fullName>
    </alternativeName>
</protein>
<reference key="1">
    <citation type="journal article" date="2004" name="Nat. Genet.">
        <title>Complete sequencing and characterization of 21,243 full-length human cDNAs.</title>
        <authorList>
            <person name="Ota T."/>
            <person name="Suzuki Y."/>
            <person name="Nishikawa T."/>
            <person name="Otsuki T."/>
            <person name="Sugiyama T."/>
            <person name="Irie R."/>
            <person name="Wakamatsu A."/>
            <person name="Hayashi K."/>
            <person name="Sato H."/>
            <person name="Nagai K."/>
            <person name="Kimura K."/>
            <person name="Makita H."/>
            <person name="Sekine M."/>
            <person name="Obayashi M."/>
            <person name="Nishi T."/>
            <person name="Shibahara T."/>
            <person name="Tanaka T."/>
            <person name="Ishii S."/>
            <person name="Yamamoto J."/>
            <person name="Saito K."/>
            <person name="Kawai Y."/>
            <person name="Isono Y."/>
            <person name="Nakamura Y."/>
            <person name="Nagahari K."/>
            <person name="Murakami K."/>
            <person name="Yasuda T."/>
            <person name="Iwayanagi T."/>
            <person name="Wagatsuma M."/>
            <person name="Shiratori A."/>
            <person name="Sudo H."/>
            <person name="Hosoiri T."/>
            <person name="Kaku Y."/>
            <person name="Kodaira H."/>
            <person name="Kondo H."/>
            <person name="Sugawara M."/>
            <person name="Takahashi M."/>
            <person name="Kanda K."/>
            <person name="Yokoi T."/>
            <person name="Furuya T."/>
            <person name="Kikkawa E."/>
            <person name="Omura Y."/>
            <person name="Abe K."/>
            <person name="Kamihara K."/>
            <person name="Katsuta N."/>
            <person name="Sato K."/>
            <person name="Tanikawa M."/>
            <person name="Yamazaki M."/>
            <person name="Ninomiya K."/>
            <person name="Ishibashi T."/>
            <person name="Yamashita H."/>
            <person name="Murakawa K."/>
            <person name="Fujimori K."/>
            <person name="Tanai H."/>
            <person name="Kimata M."/>
            <person name="Watanabe M."/>
            <person name="Hiraoka S."/>
            <person name="Chiba Y."/>
            <person name="Ishida S."/>
            <person name="Ono Y."/>
            <person name="Takiguchi S."/>
            <person name="Watanabe S."/>
            <person name="Yosida M."/>
            <person name="Hotuta T."/>
            <person name="Kusano J."/>
            <person name="Kanehori K."/>
            <person name="Takahashi-Fujii A."/>
            <person name="Hara H."/>
            <person name="Tanase T.-O."/>
            <person name="Nomura Y."/>
            <person name="Togiya S."/>
            <person name="Komai F."/>
            <person name="Hara R."/>
            <person name="Takeuchi K."/>
            <person name="Arita M."/>
            <person name="Imose N."/>
            <person name="Musashino K."/>
            <person name="Yuuki H."/>
            <person name="Oshima A."/>
            <person name="Sasaki N."/>
            <person name="Aotsuka S."/>
            <person name="Yoshikawa Y."/>
            <person name="Matsunawa H."/>
            <person name="Ichihara T."/>
            <person name="Shiohata N."/>
            <person name="Sano S."/>
            <person name="Moriya S."/>
            <person name="Momiyama H."/>
            <person name="Satoh N."/>
            <person name="Takami S."/>
            <person name="Terashima Y."/>
            <person name="Suzuki O."/>
            <person name="Nakagawa S."/>
            <person name="Senoh A."/>
            <person name="Mizoguchi H."/>
            <person name="Goto Y."/>
            <person name="Shimizu F."/>
            <person name="Wakebe H."/>
            <person name="Hishigaki H."/>
            <person name="Watanabe T."/>
            <person name="Sugiyama A."/>
            <person name="Takemoto M."/>
            <person name="Kawakami B."/>
            <person name="Yamazaki M."/>
            <person name="Watanabe K."/>
            <person name="Kumagai A."/>
            <person name="Itakura S."/>
            <person name="Fukuzumi Y."/>
            <person name="Fujimori Y."/>
            <person name="Komiyama M."/>
            <person name="Tashiro H."/>
            <person name="Tanigami A."/>
            <person name="Fujiwara T."/>
            <person name="Ono T."/>
            <person name="Yamada K."/>
            <person name="Fujii Y."/>
            <person name="Ozaki K."/>
            <person name="Hirao M."/>
            <person name="Ohmori Y."/>
            <person name="Kawabata A."/>
            <person name="Hikiji T."/>
            <person name="Kobatake N."/>
            <person name="Inagaki H."/>
            <person name="Ikema Y."/>
            <person name="Okamoto S."/>
            <person name="Okitani R."/>
            <person name="Kawakami T."/>
            <person name="Noguchi S."/>
            <person name="Itoh T."/>
            <person name="Shigeta K."/>
            <person name="Senba T."/>
            <person name="Matsumura K."/>
            <person name="Nakajima Y."/>
            <person name="Mizuno T."/>
            <person name="Morinaga M."/>
            <person name="Sasaki M."/>
            <person name="Togashi T."/>
            <person name="Oyama M."/>
            <person name="Hata H."/>
            <person name="Watanabe M."/>
            <person name="Komatsu T."/>
            <person name="Mizushima-Sugano J."/>
            <person name="Satoh T."/>
            <person name="Shirai Y."/>
            <person name="Takahashi Y."/>
            <person name="Nakagawa K."/>
            <person name="Okumura K."/>
            <person name="Nagase T."/>
            <person name="Nomura N."/>
            <person name="Kikuchi H."/>
            <person name="Masuho Y."/>
            <person name="Yamashita R."/>
            <person name="Nakai K."/>
            <person name="Yada T."/>
            <person name="Nakamura Y."/>
            <person name="Ohara O."/>
            <person name="Isogai T."/>
            <person name="Sugano S."/>
        </authorList>
    </citation>
    <scope>NUCLEOTIDE SEQUENCE [LARGE SCALE MRNA] (ISOFORMS 1; 2 AND 5)</scope>
    <source>
        <tissue>Prostate</tissue>
    </source>
</reference>
<reference key="2">
    <citation type="submission" date="2006-06" db="EMBL/GenBank/DDBJ databases">
        <authorList>
            <consortium name="NIEHS SNPs program"/>
        </authorList>
    </citation>
    <scope>NUCLEOTIDE SEQUENCE [GENOMIC DNA]</scope>
    <scope>VARIANTS ILE-29; GLN-112; ARG-114; TYR-141 AND ASN-201</scope>
</reference>
<reference key="3">
    <citation type="journal article" date="2006" name="Nature">
        <title>DNA sequence of human chromosome 17 and analysis of rearrangement in the human lineage.</title>
        <authorList>
            <person name="Zody M.C."/>
            <person name="Garber M."/>
            <person name="Adams D.J."/>
            <person name="Sharpe T."/>
            <person name="Harrow J."/>
            <person name="Lupski J.R."/>
            <person name="Nicholson C."/>
            <person name="Searle S.M."/>
            <person name="Wilming L."/>
            <person name="Young S.K."/>
            <person name="Abouelleil A."/>
            <person name="Allen N.R."/>
            <person name="Bi W."/>
            <person name="Bloom T."/>
            <person name="Borowsky M.L."/>
            <person name="Bugalter B.E."/>
            <person name="Butler J."/>
            <person name="Chang J.L."/>
            <person name="Chen C.-K."/>
            <person name="Cook A."/>
            <person name="Corum B."/>
            <person name="Cuomo C.A."/>
            <person name="de Jong P.J."/>
            <person name="DeCaprio D."/>
            <person name="Dewar K."/>
            <person name="FitzGerald M."/>
            <person name="Gilbert J."/>
            <person name="Gibson R."/>
            <person name="Gnerre S."/>
            <person name="Goldstein S."/>
            <person name="Grafham D.V."/>
            <person name="Grocock R."/>
            <person name="Hafez N."/>
            <person name="Hagopian D.S."/>
            <person name="Hart E."/>
            <person name="Norman C.H."/>
            <person name="Humphray S."/>
            <person name="Jaffe D.B."/>
            <person name="Jones M."/>
            <person name="Kamal M."/>
            <person name="Khodiyar V.K."/>
            <person name="LaButti K."/>
            <person name="Laird G."/>
            <person name="Lehoczky J."/>
            <person name="Liu X."/>
            <person name="Lokyitsang T."/>
            <person name="Loveland J."/>
            <person name="Lui A."/>
            <person name="Macdonald P."/>
            <person name="Major J.E."/>
            <person name="Matthews L."/>
            <person name="Mauceli E."/>
            <person name="McCarroll S.A."/>
            <person name="Mihalev A.H."/>
            <person name="Mudge J."/>
            <person name="Nguyen C."/>
            <person name="Nicol R."/>
            <person name="O'Leary S.B."/>
            <person name="Osoegawa K."/>
            <person name="Schwartz D.C."/>
            <person name="Shaw-Smith C."/>
            <person name="Stankiewicz P."/>
            <person name="Steward C."/>
            <person name="Swarbreck D."/>
            <person name="Venkataraman V."/>
            <person name="Whittaker C.A."/>
            <person name="Yang X."/>
            <person name="Zimmer A.R."/>
            <person name="Bradley A."/>
            <person name="Hubbard T."/>
            <person name="Birren B.W."/>
            <person name="Rogers J."/>
            <person name="Lander E.S."/>
            <person name="Nusbaum C."/>
        </authorList>
    </citation>
    <scope>NUCLEOTIDE SEQUENCE [LARGE SCALE GENOMIC DNA]</scope>
</reference>
<reference key="4">
    <citation type="submission" date="2005-07" db="EMBL/GenBank/DDBJ databases">
        <authorList>
            <person name="Mural R.J."/>
            <person name="Istrail S."/>
            <person name="Sutton G.G."/>
            <person name="Florea L."/>
            <person name="Halpern A.L."/>
            <person name="Mobarry C.M."/>
            <person name="Lippert R."/>
            <person name="Walenz B."/>
            <person name="Shatkay H."/>
            <person name="Dew I."/>
            <person name="Miller J.R."/>
            <person name="Flanigan M.J."/>
            <person name="Edwards N.J."/>
            <person name="Bolanos R."/>
            <person name="Fasulo D."/>
            <person name="Halldorsson B.V."/>
            <person name="Hannenhalli S."/>
            <person name="Turner R."/>
            <person name="Yooseph S."/>
            <person name="Lu F."/>
            <person name="Nusskern D.R."/>
            <person name="Shue B.C."/>
            <person name="Zheng X.H."/>
            <person name="Zhong F."/>
            <person name="Delcher A.L."/>
            <person name="Huson D.H."/>
            <person name="Kravitz S.A."/>
            <person name="Mouchard L."/>
            <person name="Reinert K."/>
            <person name="Remington K.A."/>
            <person name="Clark A.G."/>
            <person name="Waterman M.S."/>
            <person name="Eichler E.E."/>
            <person name="Adams M.D."/>
            <person name="Hunkapiller M.W."/>
            <person name="Myers E.W."/>
            <person name="Venter J.C."/>
        </authorList>
    </citation>
    <scope>NUCLEOTIDE SEQUENCE [LARGE SCALE GENOMIC DNA]</scope>
</reference>
<reference key="5">
    <citation type="journal article" date="2004" name="Genome Res.">
        <title>The status, quality, and expansion of the NIH full-length cDNA project: the Mammalian Gene Collection (MGC).</title>
        <authorList>
            <consortium name="The MGC Project Team"/>
        </authorList>
    </citation>
    <scope>NUCLEOTIDE SEQUENCE [LARGE SCALE MRNA] (ISOFORMS 3 AND 4)</scope>
    <source>
        <tissue>Brain</tissue>
        <tissue>Duodenum</tissue>
    </source>
</reference>
<reference key="6">
    <citation type="journal article" date="2012" name="Mutat. Res.">
        <title>Human endonuclease V as a repair enzyme for DNA deamination.</title>
        <authorList>
            <person name="Mi R."/>
            <person name="Alford-Zappala M."/>
            <person name="Kow Y.W."/>
            <person name="Cunningham R.P."/>
            <person name="Cao W."/>
        </authorList>
    </citation>
    <scope>PRELIMINARY ACTIVITY</scope>
</reference>
<reference key="7">
    <citation type="journal article" date="2012" name="PLoS ONE">
        <title>The human homolog of Escherichia coli endonuclease V is a nucleolar protein with affinity for branched DNA structures.</title>
        <authorList>
            <person name="Fladeby C."/>
            <person name="Vik E.S."/>
            <person name="Laerdahl J.K."/>
            <person name="Gran Neurauter C."/>
            <person name="Heggelund J.E."/>
            <person name="Thorgaard E."/>
            <person name="Strom-Andersen P."/>
            <person name="Bjoras M."/>
            <person name="Dalhus B."/>
            <person name="Alseth I."/>
        </authorList>
    </citation>
    <scope>FUNCTION (ISOFORM 1)</scope>
    <scope>SUBCELLULAR LOCATION (ISOFORM 1)</scope>
</reference>
<reference key="8">
    <citation type="journal article" date="2013" name="Nat. Commun.">
        <title>Endonuclease V cleaves at inosines in RNA.</title>
        <authorList>
            <person name="Sebastian Vik E."/>
            <person name="Sameen Nawaz M."/>
            <person name="Strom Andersen P."/>
            <person name="Fladeby C."/>
            <person name="Bjoras M."/>
            <person name="Dalhus B."/>
            <person name="Alseth I."/>
        </authorList>
    </citation>
    <scope>FUNCTION (ISOFORM 1)</scope>
    <scope>CATALYTIC ACTIVITY (ISOFORM 1)</scope>
    <scope>COFACTOR</scope>
    <scope>MUTAGENESIS OF ASP-52; 90-PRO--SER-93; TYR-91 AND 248-ARG-LYS-249</scope>
</reference>
<reference key="9">
    <citation type="journal article" date="2013" name="Nat. Commun.">
        <title>Human endonuclease V is a ribonuclease specific for inosine-containing RNA.</title>
        <authorList>
            <person name="Morita Y."/>
            <person name="Shibutani T."/>
            <person name="Nakanishi N."/>
            <person name="Nishikura K."/>
            <person name="Iwai S."/>
            <person name="Kuraoka I."/>
        </authorList>
    </citation>
    <scope>FUNCTION (ISOFORM 1)</scope>
    <scope>CATALYTIC ACTIVITY (ISOFORM 1)</scope>
    <scope>SUBCELLULAR LOCATION (ISOFORM 1)</scope>
    <scope>MUTAGENESIS OF ASP-52; TYR-91 AND GLU-100</scope>
</reference>
<reference key="10">
    <citation type="journal article" date="2016" name="J. Biol. Chem.">
        <title>Regulation of Human Endonuclease V Activity and Relocalization to Cytoplasmic Stress Granules.</title>
        <authorList>
            <person name="Nawaz M.S."/>
            <person name="Vik E.S."/>
            <person name="Berges N."/>
            <person name="Fladeby C."/>
            <person name="Bjoeraas M."/>
            <person name="Dalhus B."/>
            <person name="Alseth I."/>
        </authorList>
    </citation>
    <scope>FUNCTION (ISOFORM 1)</scope>
    <scope>CATALYTIC ACTIVITY (ISOFORM 1)</scope>
    <scope>ACTIVITY REGULATION (ISOFORM 1)</scope>
    <scope>INTERACTION WITH PABPC1</scope>
    <scope>SUBCELLULAR LOCATION (ISOFORM 1)</scope>
    <scope>MUTAGENESIS OF ASP-52</scope>
</reference>
<reference key="11">
    <citation type="journal article" date="2019" name="PLoS ONE">
        <title>Complex alternative splicing of human Endonuclease V mRNA, but evidence for only a single protein isoform.</title>
        <authorList>
            <person name="Berges N."/>
            <person name="Nawaz M.S."/>
            <person name="Boerresdatter Dahl T."/>
            <person name="Hagen L."/>
            <person name="Bjoeraas M."/>
            <person name="Laerdahl J.K."/>
            <person name="Alseth I."/>
        </authorList>
    </citation>
    <scope>ALTERNATIVE SPLICING (ISOFORMS 1; 6 AND 7)</scope>
    <scope>FUNCTION (ISOFORMS 1; 6 AND 7)</scope>
    <scope>CATALYTIC ACTIVITY</scope>
    <scope>SUBCELLULAR LOCATION (ISOFORMS 1; 6 AND 7)</scope>
    <scope>IDENTIFICATION BY MASS SPECTROMETRY (ISOFORM 7)</scope>
    <scope>MUTAGENESIS OF GLU-171 AND ARG-174</scope>
</reference>
<reference evidence="16" key="12">
    <citation type="journal article" date="2014" name="Acta Crystallogr. D">
        <title>Structure of human endonuclease V as an inosine-specific ribonuclease.</title>
        <authorList>
            <person name="Zhang Z."/>
            <person name="Hao Z."/>
            <person name="Wang Z."/>
            <person name="Li Q."/>
            <person name="Xie W."/>
        </authorList>
    </citation>
    <scope>X-RAY CRYSTALLOGRAPHY (2.30 ANGSTROMS) OF 13-250</scope>
    <scope>FUNCTION</scope>
    <scope>CATALYTIC ACTIVITY</scope>
    <scope>SUBUNIT</scope>
    <scope>MUTAGENESIS OF 35-ALA--PRO-40; 57-LYS--SER-60; 115-GLU--MET-119; 161-ASP--ASN-166; CYS-225; CYS-226; CYS-227 AND CYS-228</scope>
</reference>
<organism>
    <name type="scientific">Homo sapiens</name>
    <name type="common">Human</name>
    <dbReference type="NCBI Taxonomy" id="9606"/>
    <lineage>
        <taxon>Eukaryota</taxon>
        <taxon>Metazoa</taxon>
        <taxon>Chordata</taxon>
        <taxon>Craniata</taxon>
        <taxon>Vertebrata</taxon>
        <taxon>Euteleostomi</taxon>
        <taxon>Mammalia</taxon>
        <taxon>Eutheria</taxon>
        <taxon>Euarchontoglires</taxon>
        <taxon>Primates</taxon>
        <taxon>Haplorrhini</taxon>
        <taxon>Catarrhini</taxon>
        <taxon>Hominidae</taxon>
        <taxon>Homo</taxon>
    </lineage>
</organism>